<proteinExistence type="inferred from homology"/>
<evidence type="ECO:0000255" key="1">
    <source>
        <dbReference type="HAMAP-Rule" id="MF_00309"/>
    </source>
</evidence>
<dbReference type="EC" id="7.1.2.2" evidence="1"/>
<dbReference type="EMBL" id="CP000099">
    <property type="protein sequence ID" value="AAZ69369.1"/>
    <property type="molecule type" value="Genomic_DNA"/>
</dbReference>
<dbReference type="SMR" id="Q46FH3"/>
<dbReference type="STRING" id="269797.Mbar_A0386"/>
<dbReference type="PaxDb" id="269797-Mbar_A0386"/>
<dbReference type="KEGG" id="mba:Mbar_A0386"/>
<dbReference type="eggNOG" id="arCOG00868">
    <property type="taxonomic scope" value="Archaea"/>
</dbReference>
<dbReference type="HOGENOM" id="CLU_008162_3_1_2"/>
<dbReference type="OrthoDB" id="115235at2157"/>
<dbReference type="GO" id="GO:0005886">
    <property type="term" value="C:plasma membrane"/>
    <property type="evidence" value="ECO:0007669"/>
    <property type="project" value="UniProtKB-SubCell"/>
</dbReference>
<dbReference type="GO" id="GO:0033178">
    <property type="term" value="C:proton-transporting two-sector ATPase complex, catalytic domain"/>
    <property type="evidence" value="ECO:0007669"/>
    <property type="project" value="InterPro"/>
</dbReference>
<dbReference type="GO" id="GO:0005524">
    <property type="term" value="F:ATP binding"/>
    <property type="evidence" value="ECO:0007669"/>
    <property type="project" value="UniProtKB-UniRule"/>
</dbReference>
<dbReference type="GO" id="GO:0046933">
    <property type="term" value="F:proton-transporting ATP synthase activity, rotational mechanism"/>
    <property type="evidence" value="ECO:0007669"/>
    <property type="project" value="UniProtKB-UniRule"/>
</dbReference>
<dbReference type="GO" id="GO:0046961">
    <property type="term" value="F:proton-transporting ATPase activity, rotational mechanism"/>
    <property type="evidence" value="ECO:0007669"/>
    <property type="project" value="InterPro"/>
</dbReference>
<dbReference type="GO" id="GO:0042777">
    <property type="term" value="P:proton motive force-driven plasma membrane ATP synthesis"/>
    <property type="evidence" value="ECO:0007669"/>
    <property type="project" value="UniProtKB-UniRule"/>
</dbReference>
<dbReference type="CDD" id="cd18111">
    <property type="entry name" value="ATP-synt_V_A-type_alpha_C"/>
    <property type="match status" value="1"/>
</dbReference>
<dbReference type="CDD" id="cd01134">
    <property type="entry name" value="V_A-ATPase_A"/>
    <property type="match status" value="1"/>
</dbReference>
<dbReference type="FunFam" id="3.40.50.300:FF:000675">
    <property type="entry name" value="V-type ATP synthase alpha chain"/>
    <property type="match status" value="1"/>
</dbReference>
<dbReference type="FunFam" id="2.40.50.100:FF:000008">
    <property type="entry name" value="V-type proton ATPase catalytic subunit A"/>
    <property type="match status" value="1"/>
</dbReference>
<dbReference type="Gene3D" id="2.40.30.20">
    <property type="match status" value="1"/>
</dbReference>
<dbReference type="Gene3D" id="2.40.50.100">
    <property type="match status" value="1"/>
</dbReference>
<dbReference type="Gene3D" id="1.10.1140.10">
    <property type="entry name" value="Bovine Mitochondrial F1-atpase, Atp Synthase Beta Chain, Chain D, domain 3"/>
    <property type="match status" value="1"/>
</dbReference>
<dbReference type="Gene3D" id="3.40.50.300">
    <property type="entry name" value="P-loop containing nucleotide triphosphate hydrolases"/>
    <property type="match status" value="1"/>
</dbReference>
<dbReference type="HAMAP" id="MF_00309">
    <property type="entry name" value="ATP_synth_A_arch"/>
    <property type="match status" value="1"/>
</dbReference>
<dbReference type="InterPro" id="IPR055190">
    <property type="entry name" value="ATP-synt_VA_C"/>
</dbReference>
<dbReference type="InterPro" id="IPR031686">
    <property type="entry name" value="ATP-synth_a_Xtn"/>
</dbReference>
<dbReference type="InterPro" id="IPR023366">
    <property type="entry name" value="ATP_synth_asu-like_sf"/>
</dbReference>
<dbReference type="InterPro" id="IPR005726">
    <property type="entry name" value="ATP_synth_asu_arc"/>
</dbReference>
<dbReference type="InterPro" id="IPR020003">
    <property type="entry name" value="ATPase_a/bsu_AS"/>
</dbReference>
<dbReference type="InterPro" id="IPR004100">
    <property type="entry name" value="ATPase_F1/V1/A1_a/bsu_N"/>
</dbReference>
<dbReference type="InterPro" id="IPR036121">
    <property type="entry name" value="ATPase_F1/V1/A1_a/bsu_N_sf"/>
</dbReference>
<dbReference type="InterPro" id="IPR000194">
    <property type="entry name" value="ATPase_F1/V1/A1_a/bsu_nucl-bd"/>
</dbReference>
<dbReference type="InterPro" id="IPR024034">
    <property type="entry name" value="ATPase_F1/V1_b/a_C"/>
</dbReference>
<dbReference type="InterPro" id="IPR027417">
    <property type="entry name" value="P-loop_NTPase"/>
</dbReference>
<dbReference type="InterPro" id="IPR022878">
    <property type="entry name" value="V-ATPase_asu"/>
</dbReference>
<dbReference type="NCBIfam" id="TIGR01043">
    <property type="entry name" value="ATP_syn_A_arch"/>
    <property type="match status" value="1"/>
</dbReference>
<dbReference type="NCBIfam" id="NF003220">
    <property type="entry name" value="PRK04192.1"/>
    <property type="match status" value="1"/>
</dbReference>
<dbReference type="PANTHER" id="PTHR43607:SF1">
    <property type="entry name" value="H(+)-TRANSPORTING TWO-SECTOR ATPASE"/>
    <property type="match status" value="1"/>
</dbReference>
<dbReference type="PANTHER" id="PTHR43607">
    <property type="entry name" value="V-TYPE PROTON ATPASE CATALYTIC SUBUNIT A"/>
    <property type="match status" value="1"/>
</dbReference>
<dbReference type="Pfam" id="PF00006">
    <property type="entry name" value="ATP-synt_ab"/>
    <property type="match status" value="1"/>
</dbReference>
<dbReference type="Pfam" id="PF02874">
    <property type="entry name" value="ATP-synt_ab_N"/>
    <property type="match status" value="1"/>
</dbReference>
<dbReference type="Pfam" id="PF16886">
    <property type="entry name" value="ATP-synt_ab_Xtn"/>
    <property type="match status" value="1"/>
</dbReference>
<dbReference type="Pfam" id="PF22919">
    <property type="entry name" value="ATP-synt_VA_C"/>
    <property type="match status" value="1"/>
</dbReference>
<dbReference type="SUPFAM" id="SSF47917">
    <property type="entry name" value="C-terminal domain of alpha and beta subunits of F1 ATP synthase"/>
    <property type="match status" value="1"/>
</dbReference>
<dbReference type="SUPFAM" id="SSF50615">
    <property type="entry name" value="N-terminal domain of alpha and beta subunits of F1 ATP synthase"/>
    <property type="match status" value="1"/>
</dbReference>
<dbReference type="SUPFAM" id="SSF52540">
    <property type="entry name" value="P-loop containing nucleoside triphosphate hydrolases"/>
    <property type="match status" value="1"/>
</dbReference>
<dbReference type="PROSITE" id="PS00152">
    <property type="entry name" value="ATPASE_ALPHA_BETA"/>
    <property type="match status" value="1"/>
</dbReference>
<comment type="function">
    <text evidence="1">Component of the A-type ATP synthase that produces ATP from ADP in the presence of a proton gradient across the membrane. The A chain is the catalytic subunit.</text>
</comment>
<comment type="catalytic activity">
    <reaction evidence="1">
        <text>ATP + H2O + 4 H(+)(in) = ADP + phosphate + 5 H(+)(out)</text>
        <dbReference type="Rhea" id="RHEA:57720"/>
        <dbReference type="ChEBI" id="CHEBI:15377"/>
        <dbReference type="ChEBI" id="CHEBI:15378"/>
        <dbReference type="ChEBI" id="CHEBI:30616"/>
        <dbReference type="ChEBI" id="CHEBI:43474"/>
        <dbReference type="ChEBI" id="CHEBI:456216"/>
        <dbReference type="EC" id="7.1.2.2"/>
    </reaction>
</comment>
<comment type="subunit">
    <text evidence="1">Has multiple subunits with at least A(3), B(3), C, D, E, F, H, I and proteolipid K(x).</text>
</comment>
<comment type="subcellular location">
    <subcellularLocation>
        <location evidence="1">Cell membrane</location>
        <topology evidence="1">Peripheral membrane protein</topology>
    </subcellularLocation>
</comment>
<comment type="similarity">
    <text evidence="1">Belongs to the ATPase alpha/beta chains family.</text>
</comment>
<feature type="chain" id="PRO_1000059345" description="A-type ATP synthase subunit A">
    <location>
        <begin position="1"/>
        <end position="578"/>
    </location>
</feature>
<feature type="binding site" evidence="1">
    <location>
        <begin position="228"/>
        <end position="235"/>
    </location>
    <ligand>
        <name>ATP</name>
        <dbReference type="ChEBI" id="CHEBI:30616"/>
    </ligand>
</feature>
<protein>
    <recommendedName>
        <fullName evidence="1">A-type ATP synthase subunit A</fullName>
        <ecNumber evidence="1">7.1.2.2</ecNumber>
    </recommendedName>
</protein>
<accession>Q46FH3</accession>
<sequence>MEVKGEIYRVSGPVVTVTGLQAKMYDLVKVGDEGLMGEVIQILGPKTIIQVYEETAGIKPGEPCYSTGSSLSVELGPGLLSSIYDGVQRPLHVLLERTGGFIGRGVTADGLDHKKLWEFKPVAKKGDSVKGGDVIGVVQETVNIEHKIMVPPDISGTISDIKSGNFTVVDTICTLTDGTELQMMQKWPVRRPRPVRTKLTPTRPLVTGMRILDGLFPVAKGGTAAIPGPFGSGKTVTQQSLAKWSDTEIVVYIGCGERGNEMADVLSEFPELEDPQTGRPLMERTVLIANTSNMPVAAREASVYTGITIAEYFRDMGLDVSLMADSTSRWAEAMREISSRLEEMPGEEGYPAYLSARLAEFYERAGVAESLCGETGSITVIGAVSPPGGDFSEPVTQNTLRIVKVFWALDAKLSQRRHFPAINWLNSYSLYKDSLNDWFADNVAPDYVPLRERAMEMLQTESELQEIVQLVGSDALPDDQQLLLEITRMLREIFLQQNAFHPVDAYSPFAQQYRILKAIMKWGDAAMEALKSGVPVPEILKLESKNVLAKVKYEEKFDESMNAVLTQMDKEFASLRGR</sequence>
<organism>
    <name type="scientific">Methanosarcina barkeri (strain Fusaro / DSM 804)</name>
    <dbReference type="NCBI Taxonomy" id="269797"/>
    <lineage>
        <taxon>Archaea</taxon>
        <taxon>Methanobacteriati</taxon>
        <taxon>Methanobacteriota</taxon>
        <taxon>Stenosarchaea group</taxon>
        <taxon>Methanomicrobia</taxon>
        <taxon>Methanosarcinales</taxon>
        <taxon>Methanosarcinaceae</taxon>
        <taxon>Methanosarcina</taxon>
    </lineage>
</organism>
<reference key="1">
    <citation type="journal article" date="2006" name="J. Bacteriol.">
        <title>The Methanosarcina barkeri genome: comparative analysis with Methanosarcina acetivorans and Methanosarcina mazei reveals extensive rearrangement within methanosarcinal genomes.</title>
        <authorList>
            <person name="Maeder D.L."/>
            <person name="Anderson I."/>
            <person name="Brettin T.S."/>
            <person name="Bruce D.C."/>
            <person name="Gilna P."/>
            <person name="Han C.S."/>
            <person name="Lapidus A."/>
            <person name="Metcalf W.W."/>
            <person name="Saunders E."/>
            <person name="Tapia R."/>
            <person name="Sowers K.R."/>
        </authorList>
    </citation>
    <scope>NUCLEOTIDE SEQUENCE [LARGE SCALE GENOMIC DNA]</scope>
    <source>
        <strain>Fusaro / DSM 804</strain>
    </source>
</reference>
<gene>
    <name evidence="1" type="primary">atpA</name>
    <name type="ordered locus">Mbar_A0386</name>
</gene>
<name>AATA_METBF</name>
<keyword id="KW-0066">ATP synthesis</keyword>
<keyword id="KW-0067">ATP-binding</keyword>
<keyword id="KW-1003">Cell membrane</keyword>
<keyword id="KW-0375">Hydrogen ion transport</keyword>
<keyword id="KW-0406">Ion transport</keyword>
<keyword id="KW-0472">Membrane</keyword>
<keyword id="KW-0547">Nucleotide-binding</keyword>
<keyword id="KW-1278">Translocase</keyword>
<keyword id="KW-0813">Transport</keyword>